<feature type="chain" id="PRO_0000457920" description="Turritoxin F21-2" evidence="1">
    <location>
        <begin position="1"/>
        <end position="28" status="greater than"/>
    </location>
</feature>
<feature type="non-terminal residue" evidence="3">
    <location>
        <position position="28"/>
    </location>
</feature>
<name>TUL2_POLNO</name>
<organism>
    <name type="scientific">Polystira nobilis</name>
    <name type="common">Sea snail</name>
    <name type="synonym">Pleurotoma nobilis</name>
    <dbReference type="NCBI Taxonomy" id="1525234"/>
    <lineage>
        <taxon>Eukaryota</taxon>
        <taxon>Metazoa</taxon>
        <taxon>Spiralia</taxon>
        <taxon>Lophotrochozoa</taxon>
        <taxon>Mollusca</taxon>
        <taxon>Gastropoda</taxon>
        <taxon>Caenogastropoda</taxon>
        <taxon>Neogastropoda</taxon>
        <taxon>Conoidea</taxon>
        <taxon>Turridae</taxon>
        <taxon>Polystira</taxon>
    </lineage>
</organism>
<proteinExistence type="evidence at protein level"/>
<reference key="1">
    <citation type="journal article" date="2020" name="Insect Biochem. Mol. Biol.">
        <title>A turripeptide from Polystira nobilis venom inhibits human alpha3beta2 and alpha7 nicotinic acetylcholine receptors.</title>
        <authorList>
            <person name="Hernandez-Samano A.C."/>
            <person name="Falcon A."/>
            <person name="Zamudio F."/>
            <person name="Ortiz-Arellano M.A."/>
            <person name="Lopez-Vera E."/>
            <person name="Aguilar M.B."/>
        </authorList>
    </citation>
    <scope>PROTEIN SEQUENCE</scope>
    <scope>FUNCTION</scope>
    <scope>SUBCELLULAR LOCATION</scope>
    <scope>MASS SPECTROMETRY</scope>
    <source>
        <tissue>Venom</tissue>
    </source>
</reference>
<dbReference type="GO" id="GO:0005576">
    <property type="term" value="C:extracellular region"/>
    <property type="evidence" value="ECO:0007669"/>
    <property type="project" value="UniProtKB-SubCell"/>
</dbReference>
<dbReference type="GO" id="GO:0035792">
    <property type="term" value="C:host cell postsynaptic membrane"/>
    <property type="evidence" value="ECO:0007669"/>
    <property type="project" value="UniProtKB-KW"/>
</dbReference>
<dbReference type="GO" id="GO:0030550">
    <property type="term" value="F:acetylcholine receptor inhibitor activity"/>
    <property type="evidence" value="ECO:0007669"/>
    <property type="project" value="UniProtKB-KW"/>
</dbReference>
<dbReference type="GO" id="GO:0090729">
    <property type="term" value="F:toxin activity"/>
    <property type="evidence" value="ECO:0007669"/>
    <property type="project" value="UniProtKB-KW"/>
</dbReference>
<comment type="function">
    <text evidence="1">Potent inhibitor of human alpha-3-beta-2 nAChRs (IC(50)=566.2 nM). Irreversibly inhibits the acetylcholine-induced response on human alpha-7/CHRNA7 (55% inhibition at 5.6 uM) and alpha-3-beta-2/CHRNA3-CHRNB2 (91% inhibition) nAChRs.</text>
</comment>
<comment type="subcellular location">
    <subcellularLocation>
        <location evidence="1">Secreted</location>
    </subcellularLocation>
</comment>
<comment type="tissue specificity">
    <text evidence="3">Expressed by the venom duct.</text>
</comment>
<comment type="mass spectrometry">
    <text>Average mass.</text>
</comment>
<comment type="miscellaneous">
    <text evidence="3">According to molecular mass, may be composed of about 112 residues.</text>
</comment>
<keyword id="KW-0008">Acetylcholine receptor inhibiting toxin</keyword>
<keyword id="KW-0903">Direct protein sequencing</keyword>
<keyword id="KW-0528">Neurotoxin</keyword>
<keyword id="KW-0629">Postsynaptic neurotoxin</keyword>
<keyword id="KW-0964">Secreted</keyword>
<keyword id="KW-0800">Toxin</keyword>
<accession>P0DQY2</accession>
<sequence>WFRSFKSYYGHHGSVYRPNEPNFRSFAS</sequence>
<protein>
    <recommendedName>
        <fullName evidence="2">Turritoxin F21-2</fullName>
    </recommendedName>
    <alternativeName>
        <fullName evidence="2">Turripeptide F21-2</fullName>
    </alternativeName>
</protein>
<evidence type="ECO:0000269" key="1">
    <source>
    </source>
</evidence>
<evidence type="ECO:0000303" key="2">
    <source>
    </source>
</evidence>
<evidence type="ECO:0000305" key="3">
    <source>
    </source>
</evidence>